<proteinExistence type="evidence at protein level"/>
<comment type="function">
    <text>In h- cells under nutritional starvation, P-factor induces alteration of cell morphology toward mating, arrest of the cell cycle at the G1 phase prior to the initiation of DNA synthesis and indirect transcriptional activation of the sxa2 gene which down-regulates the signaling pathway.</text>
</comment>
<comment type="subcellular location">
    <subcellularLocation>
        <location>Secreted</location>
    </subcellularLocation>
</comment>
<comment type="domain">
    <text>The Pro-P-factor precursor carries 4 repetitive units. The second and fourth units generate the major form of the P-factor in the cell. The first and the third units encode slightly different peptides, the fate of which is unclear.</text>
</comment>
<comment type="PTM">
    <text evidence="2">Proteolytically cleaved by kpr, probably at the C-terminal side of dibasic Lys-Arg residues.</text>
</comment>
<comment type="PTM">
    <text evidence="2">Glycosylated. Most of the precursor molecules are glycosylated on at least one site, but only a small proportion are glycosylated on both sites.</text>
</comment>
<name>MATP2_SCHPO</name>
<reference key="1">
    <citation type="journal article" date="1994" name="Genes Dev.">
        <title>The fission yeast mating pheromone P-factor: its molecular structure, gene structure, and ability to induce gene expression and G1 arrest in the mating partner.</title>
        <authorList>
            <person name="Imai Y."/>
            <person name="Yamamoto M."/>
        </authorList>
    </citation>
    <scope>NUCLEOTIDE SEQUENCE [GENOMIC DNA]</scope>
    <scope>PROTEIN SEQUENCE OF 66-88</scope>
</reference>
<reference key="2">
    <citation type="journal article" date="2002" name="Nature">
        <title>The genome sequence of Schizosaccharomyces pombe.</title>
        <authorList>
            <person name="Wood V."/>
            <person name="Gwilliam R."/>
            <person name="Rajandream M.A."/>
            <person name="Lyne M.H."/>
            <person name="Lyne R."/>
            <person name="Stewart A."/>
            <person name="Sgouros J.G."/>
            <person name="Peat N."/>
            <person name="Hayles J."/>
            <person name="Baker S.G."/>
            <person name="Basham D."/>
            <person name="Bowman S."/>
            <person name="Brooks K."/>
            <person name="Brown D."/>
            <person name="Brown S."/>
            <person name="Chillingworth T."/>
            <person name="Churcher C.M."/>
            <person name="Collins M."/>
            <person name="Connor R."/>
            <person name="Cronin A."/>
            <person name="Davis P."/>
            <person name="Feltwell T."/>
            <person name="Fraser A."/>
            <person name="Gentles S."/>
            <person name="Goble A."/>
            <person name="Hamlin N."/>
            <person name="Harris D.E."/>
            <person name="Hidalgo J."/>
            <person name="Hodgson G."/>
            <person name="Holroyd S."/>
            <person name="Hornsby T."/>
            <person name="Howarth S."/>
            <person name="Huckle E.J."/>
            <person name="Hunt S."/>
            <person name="Jagels K."/>
            <person name="James K.D."/>
            <person name="Jones L."/>
            <person name="Jones M."/>
            <person name="Leather S."/>
            <person name="McDonald S."/>
            <person name="McLean J."/>
            <person name="Mooney P."/>
            <person name="Moule S."/>
            <person name="Mungall K.L."/>
            <person name="Murphy L.D."/>
            <person name="Niblett D."/>
            <person name="Odell C."/>
            <person name="Oliver K."/>
            <person name="O'Neil S."/>
            <person name="Pearson D."/>
            <person name="Quail M.A."/>
            <person name="Rabbinowitsch E."/>
            <person name="Rutherford K.M."/>
            <person name="Rutter S."/>
            <person name="Saunders D."/>
            <person name="Seeger K."/>
            <person name="Sharp S."/>
            <person name="Skelton J."/>
            <person name="Simmonds M.N."/>
            <person name="Squares R."/>
            <person name="Squares S."/>
            <person name="Stevens K."/>
            <person name="Taylor K."/>
            <person name="Taylor R.G."/>
            <person name="Tivey A."/>
            <person name="Walsh S.V."/>
            <person name="Warren T."/>
            <person name="Whitehead S."/>
            <person name="Woodward J.R."/>
            <person name="Volckaert G."/>
            <person name="Aert R."/>
            <person name="Robben J."/>
            <person name="Grymonprez B."/>
            <person name="Weltjens I."/>
            <person name="Vanstreels E."/>
            <person name="Rieger M."/>
            <person name="Schaefer M."/>
            <person name="Mueller-Auer S."/>
            <person name="Gabel C."/>
            <person name="Fuchs M."/>
            <person name="Duesterhoeft A."/>
            <person name="Fritzc C."/>
            <person name="Holzer E."/>
            <person name="Moestl D."/>
            <person name="Hilbert H."/>
            <person name="Borzym K."/>
            <person name="Langer I."/>
            <person name="Beck A."/>
            <person name="Lehrach H."/>
            <person name="Reinhardt R."/>
            <person name="Pohl T.M."/>
            <person name="Eger P."/>
            <person name="Zimmermann W."/>
            <person name="Wedler H."/>
            <person name="Wambutt R."/>
            <person name="Purnelle B."/>
            <person name="Goffeau A."/>
            <person name="Cadieu E."/>
            <person name="Dreano S."/>
            <person name="Gloux S."/>
            <person name="Lelaure V."/>
            <person name="Mottier S."/>
            <person name="Galibert F."/>
            <person name="Aves S.J."/>
            <person name="Xiang Z."/>
            <person name="Hunt C."/>
            <person name="Moore K."/>
            <person name="Hurst S.M."/>
            <person name="Lucas M."/>
            <person name="Rochet M."/>
            <person name="Gaillardin C."/>
            <person name="Tallada V.A."/>
            <person name="Garzon A."/>
            <person name="Thode G."/>
            <person name="Daga R.R."/>
            <person name="Cruzado L."/>
            <person name="Jimenez J."/>
            <person name="Sanchez M."/>
            <person name="del Rey F."/>
            <person name="Benito J."/>
            <person name="Dominguez A."/>
            <person name="Revuelta J.L."/>
            <person name="Moreno S."/>
            <person name="Armstrong J."/>
            <person name="Forsburg S.L."/>
            <person name="Cerutti L."/>
            <person name="Lowe T."/>
            <person name="McCombie W.R."/>
            <person name="Paulsen I."/>
            <person name="Potashkin J."/>
            <person name="Shpakovski G.V."/>
            <person name="Ussery D."/>
            <person name="Barrell B.G."/>
            <person name="Nurse P."/>
        </authorList>
    </citation>
    <scope>NUCLEOTIDE SEQUENCE [LARGE SCALE GENOMIC DNA]</scope>
    <source>
        <strain>972 / ATCC 24843</strain>
    </source>
</reference>
<reference key="3">
    <citation type="journal article" date="1994" name="EMBO J.">
        <title>Isolation and characterization of krp, a dibasic endopeptidase required for cell viability in the fission yeast Schizosaccharomyces pombe.</title>
        <authorList>
            <person name="Davey J."/>
            <person name="Davis K."/>
            <person name="Imai Y."/>
            <person name="Yamamoto M."/>
            <person name="Matthews G."/>
        </authorList>
    </citation>
    <scope>CLEAVAGE BY KPR</scope>
    <scope>GLYCOSYLATION</scope>
</reference>
<dbReference type="EMBL" id="D26072">
    <property type="protein sequence ID" value="BAA05067.1"/>
    <property type="molecule type" value="Genomic_DNA"/>
</dbReference>
<dbReference type="EMBL" id="CU329672">
    <property type="protein sequence ID" value="CAA18641.1"/>
    <property type="molecule type" value="Genomic_DNA"/>
</dbReference>
<dbReference type="PIR" id="A36985">
    <property type="entry name" value="A36985"/>
</dbReference>
<dbReference type="RefSeq" id="NP_588038.1">
    <property type="nucleotide sequence ID" value="NM_001023030.2"/>
</dbReference>
<dbReference type="BioGRID" id="275957">
    <property type="interactions" value="3"/>
</dbReference>
<dbReference type="STRING" id="284812.Q09180"/>
<dbReference type="GlyCosmos" id="Q09180">
    <property type="glycosylation" value="2 sites, No reported glycans"/>
</dbReference>
<dbReference type="PaxDb" id="4896-SPCC1795.06.1"/>
<dbReference type="EnsemblFungi" id="SPCC1795.06.1">
    <property type="protein sequence ID" value="SPCC1795.06.1:pep"/>
    <property type="gene ID" value="SPCC1795.06"/>
</dbReference>
<dbReference type="GeneID" id="2539392"/>
<dbReference type="KEGG" id="spo:2539392"/>
<dbReference type="PomBase" id="SPCC1795.06">
    <property type="gene designation" value="map2"/>
</dbReference>
<dbReference type="VEuPathDB" id="FungiDB:SPCC1795.06"/>
<dbReference type="HOGENOM" id="CLU_1361120_0_0_1"/>
<dbReference type="InParanoid" id="Q09180"/>
<dbReference type="OMA" id="HWWNFRN"/>
<dbReference type="PRO" id="PR:Q09180"/>
<dbReference type="Proteomes" id="UP000002485">
    <property type="component" value="Chromosome III"/>
</dbReference>
<dbReference type="GO" id="GO:0009986">
    <property type="term" value="C:cell surface"/>
    <property type="evidence" value="ECO:0000305"/>
    <property type="project" value="PomBase"/>
</dbReference>
<dbReference type="GO" id="GO:0005576">
    <property type="term" value="C:extracellular region"/>
    <property type="evidence" value="ECO:0000305"/>
    <property type="project" value="PomBase"/>
</dbReference>
<dbReference type="GO" id="GO:0000772">
    <property type="term" value="F:mating pheromone activity"/>
    <property type="evidence" value="ECO:0000314"/>
    <property type="project" value="PomBase"/>
</dbReference>
<dbReference type="GO" id="GO:0007267">
    <property type="term" value="P:cell-cell signaling"/>
    <property type="evidence" value="ECO:0000314"/>
    <property type="project" value="PomBase"/>
</dbReference>
<dbReference type="GO" id="GO:0031142">
    <property type="term" value="P:induction of conjugation upon nitrogen starvation"/>
    <property type="evidence" value="ECO:0000315"/>
    <property type="project" value="PomBase"/>
</dbReference>
<dbReference type="GO" id="GO:0010514">
    <property type="term" value="P:induction of conjugation with cellular fusion"/>
    <property type="evidence" value="ECO:0000314"/>
    <property type="project" value="PomBase"/>
</dbReference>
<dbReference type="GO" id="GO:0062038">
    <property type="term" value="P:positive regulation of pheromone response MAPK cascade"/>
    <property type="evidence" value="ECO:0000314"/>
    <property type="project" value="PomBase"/>
</dbReference>
<dbReference type="GO" id="GO:0032005">
    <property type="term" value="P:signal transduction involved in positive regulation of conjugation with cellular fusion"/>
    <property type="evidence" value="ECO:0000304"/>
    <property type="project" value="PomBase"/>
</dbReference>
<protein>
    <recommendedName>
        <fullName>Pro-P-factor</fullName>
    </recommendedName>
    <component>
        <recommendedName>
            <fullName>P-factor</fullName>
        </recommendedName>
    </component>
    <component>
        <recommendedName>
            <fullName>P-factor-like 1</fullName>
        </recommendedName>
    </component>
    <component>
        <recommendedName>
            <fullName>P-factor-like 2</fullName>
        </recommendedName>
    </component>
</protein>
<accession>Q09180</accession>
<sequence>MKITAVIALLFSLAAASPIPVADPGVVSVSKSYADFLRVYQSWNTFANPDRPNLKKREFEAAPAKTYADFLRAYQSWNTFVNPDRPNLKKREFEAAPEKSYADFLRAYHSWNTFVNPDRPNLKKREFEAAPAKTYADFLRAYQSWNTFVNPDRPNLKKRTEEDEENEEEDEEYYRFLQFYIMTVPENSTITDVNITAKFES</sequence>
<keyword id="KW-0131">Cell cycle</keyword>
<keyword id="KW-0165">Cleavage on pair of basic residues</keyword>
<keyword id="KW-0903">Direct protein sequencing</keyword>
<keyword id="KW-0325">Glycoprotein</keyword>
<keyword id="KW-0588">Pheromone</keyword>
<keyword id="KW-1185">Reference proteome</keyword>
<keyword id="KW-0677">Repeat</keyword>
<keyword id="KW-0964">Secreted</keyword>
<keyword id="KW-0732">Signal</keyword>
<organism>
    <name type="scientific">Schizosaccharomyces pombe (strain 972 / ATCC 24843)</name>
    <name type="common">Fission yeast</name>
    <dbReference type="NCBI Taxonomy" id="284812"/>
    <lineage>
        <taxon>Eukaryota</taxon>
        <taxon>Fungi</taxon>
        <taxon>Dikarya</taxon>
        <taxon>Ascomycota</taxon>
        <taxon>Taphrinomycotina</taxon>
        <taxon>Schizosaccharomycetes</taxon>
        <taxon>Schizosaccharomycetales</taxon>
        <taxon>Schizosaccharomycetaceae</taxon>
        <taxon>Schizosaccharomyces</taxon>
    </lineage>
</organism>
<gene>
    <name type="primary">map2</name>
    <name type="ORF">SPCC1795.06</name>
</gene>
<feature type="signal peptide" evidence="1">
    <location>
        <begin position="1"/>
        <end position="20"/>
    </location>
</feature>
<feature type="propeptide" id="PRO_0000021642">
    <location>
        <begin position="21"/>
        <end position="31"/>
    </location>
</feature>
<feature type="peptide" id="PRO_0000021643" description="P-factor-like 1">
    <location>
        <begin position="32"/>
        <end position="54"/>
    </location>
</feature>
<feature type="propeptide" id="PRO_0000021644" evidence="3">
    <location>
        <begin position="58"/>
        <end position="65"/>
    </location>
</feature>
<feature type="peptide" id="PRO_0000021645" description="P-factor">
    <location>
        <begin position="66"/>
        <end position="88"/>
    </location>
</feature>
<feature type="propeptide" id="PRO_0000021646">
    <location>
        <begin position="92"/>
        <end position="99"/>
    </location>
</feature>
<feature type="peptide" id="PRO_0000021647" description="P-factor-like 2">
    <location>
        <begin position="100"/>
        <end position="122"/>
    </location>
</feature>
<feature type="propeptide" id="PRO_0000021648">
    <location>
        <begin position="126"/>
        <end position="133"/>
    </location>
</feature>
<feature type="peptide" id="PRO_0000021649" description="P-factor">
    <location>
        <begin position="134"/>
        <end position="156"/>
    </location>
</feature>
<feature type="propeptide" id="PRO_0000021650">
    <location>
        <begin position="160"/>
        <end position="201"/>
    </location>
</feature>
<feature type="glycosylation site" description="N-linked (GlcNAc...) asparagine" evidence="1">
    <location>
        <position position="187"/>
    </location>
</feature>
<feature type="glycosylation site" description="N-linked (GlcNAc...) asparagine" evidence="1">
    <location>
        <position position="194"/>
    </location>
</feature>
<evidence type="ECO:0000255" key="1"/>
<evidence type="ECO:0000269" key="2">
    <source>
    </source>
</evidence>
<evidence type="ECO:0000269" key="3">
    <source>
    </source>
</evidence>